<organism>
    <name type="scientific">Burkholderia mallei (strain ATCC 23344)</name>
    <dbReference type="NCBI Taxonomy" id="243160"/>
    <lineage>
        <taxon>Bacteria</taxon>
        <taxon>Pseudomonadati</taxon>
        <taxon>Pseudomonadota</taxon>
        <taxon>Betaproteobacteria</taxon>
        <taxon>Burkholderiales</taxon>
        <taxon>Burkholderiaceae</taxon>
        <taxon>Burkholderia</taxon>
        <taxon>pseudomallei group</taxon>
    </lineage>
</organism>
<accession>Q62B07</accession>
<reference key="1">
    <citation type="journal article" date="2004" name="Proc. Natl. Acad. Sci. U.S.A.">
        <title>Structural flexibility in the Burkholderia mallei genome.</title>
        <authorList>
            <person name="Nierman W.C."/>
            <person name="DeShazer D."/>
            <person name="Kim H.S."/>
            <person name="Tettelin H."/>
            <person name="Nelson K.E."/>
            <person name="Feldblyum T.V."/>
            <person name="Ulrich R.L."/>
            <person name="Ronning C.M."/>
            <person name="Brinkac L.M."/>
            <person name="Daugherty S.C."/>
            <person name="Davidsen T.D."/>
            <person name="DeBoy R.T."/>
            <person name="Dimitrov G."/>
            <person name="Dodson R.J."/>
            <person name="Durkin A.S."/>
            <person name="Gwinn M.L."/>
            <person name="Haft D.H."/>
            <person name="Khouri H.M."/>
            <person name="Kolonay J.F."/>
            <person name="Madupu R."/>
            <person name="Mohammoud Y."/>
            <person name="Nelson W.C."/>
            <person name="Radune D."/>
            <person name="Romero C.M."/>
            <person name="Sarria S."/>
            <person name="Selengut J."/>
            <person name="Shamblin C."/>
            <person name="Sullivan S.A."/>
            <person name="White O."/>
            <person name="Yu Y."/>
            <person name="Zafar N."/>
            <person name="Zhou L."/>
            <person name="Fraser C.M."/>
        </authorList>
    </citation>
    <scope>NUCLEOTIDE SEQUENCE [LARGE SCALE GENOMIC DNA]</scope>
    <source>
        <strain>ATCC 23344</strain>
    </source>
</reference>
<sequence length="620" mass="64680">MSSGVQGGPAANANAYQTHPLRDAASALGTLSPQAYVDVVSAAQRNFLERMSQLASEQCDAQPAAHDARLDDRPALRAPQERDAPPLGASDTGSRASGAAKLTELLGVLMSVISASSLDELKQRSDIWNQMSKAAQDNLSRLSDAFQRATDEAKAAADAAEQAAAAAKQAGADAKAADAAVDAAQKRYDDAVKQGLPDDRLQSLKAALEQARQQAGDAHGRADALQADATKKLDAASALATQARACEQQVDDAVNQATQQYGASASLRTPQSPRLSGAAELTAVLGKLQELISSGNVKELESKQKLFTEMQAKREAELQKKSDEYQAQVKKAEEMQKTMGCIGKIVGWVITAVSFAAAAFTGGASLALAAVGLALAVGDEISRATTGVSFMDKLMQPVMDAILKPLMEMISSLITKALVACGVDQQKAELAGAILGAVVTGVALVAAAFVGASAVKAVASKVIDAMAGQLTKLMDSAIGKMLVQLIEKFSEKSGLQALGSRTATAMTRMRRAIGVEAKEDGMLLANRFEKAGTVMNVGNQVSQAAGGIVVGVERAKAMGLLADVKEAMYDIKLLGDLLKQAVDAFAEHNRVLAQLMQQMSDAGEMQTSTGKLILRNARAV</sequence>
<keyword id="KW-0175">Coiled coil</keyword>
<keyword id="KW-1043">Host membrane</keyword>
<keyword id="KW-0472">Membrane</keyword>
<keyword id="KW-1185">Reference proteome</keyword>
<keyword id="KW-0964">Secreted</keyword>
<keyword id="KW-0812">Transmembrane</keyword>
<keyword id="KW-1133">Transmembrane helix</keyword>
<keyword id="KW-0843">Virulence</keyword>
<feature type="chain" id="PRO_0000343989" description="Translocator protein BipB">
    <location>
        <begin position="1"/>
        <end position="620"/>
    </location>
</feature>
<feature type="transmembrane region" description="Helical" evidence="2">
    <location>
        <begin position="355"/>
        <end position="375"/>
    </location>
</feature>
<feature type="transmembrane region" description="Helical" evidence="2">
    <location>
        <begin position="401"/>
        <end position="421"/>
    </location>
</feature>
<feature type="transmembrane region" description="Helical" evidence="2">
    <location>
        <begin position="430"/>
        <end position="450"/>
    </location>
</feature>
<feature type="region of interest" description="Disordered" evidence="3">
    <location>
        <begin position="58"/>
        <end position="95"/>
    </location>
</feature>
<feature type="coiled-coil region" evidence="2">
    <location>
        <begin position="309"/>
        <end position="339"/>
    </location>
</feature>
<feature type="compositionally biased region" description="Basic and acidic residues" evidence="3">
    <location>
        <begin position="66"/>
        <end position="84"/>
    </location>
</feature>
<proteinExistence type="inferred from homology"/>
<gene>
    <name type="primary">bipB</name>
    <name type="ordered locus">BMAA1531</name>
</gene>
<dbReference type="EMBL" id="CP000011">
    <property type="protein sequence ID" value="AAU46007.1"/>
    <property type="molecule type" value="Genomic_DNA"/>
</dbReference>
<dbReference type="RefSeq" id="WP_004533397.1">
    <property type="nucleotide sequence ID" value="NC_006349.2"/>
</dbReference>
<dbReference type="RefSeq" id="YP_106121.1">
    <property type="nucleotide sequence ID" value="NC_006349.2"/>
</dbReference>
<dbReference type="SMR" id="Q62B07"/>
<dbReference type="GeneID" id="93063712"/>
<dbReference type="KEGG" id="bma:BMAA1531"/>
<dbReference type="PATRIC" id="fig|243160.12.peg.5107"/>
<dbReference type="eggNOG" id="ENOG502ZBCB">
    <property type="taxonomic scope" value="Bacteria"/>
</dbReference>
<dbReference type="HOGENOM" id="CLU_027418_0_0_4"/>
<dbReference type="Proteomes" id="UP000006693">
    <property type="component" value="Chromosome 2"/>
</dbReference>
<dbReference type="GO" id="GO:0005576">
    <property type="term" value="C:extracellular region"/>
    <property type="evidence" value="ECO:0007669"/>
    <property type="project" value="UniProtKB-SubCell"/>
</dbReference>
<dbReference type="GO" id="GO:0033644">
    <property type="term" value="C:host cell membrane"/>
    <property type="evidence" value="ECO:0007669"/>
    <property type="project" value="UniProtKB-SubCell"/>
</dbReference>
<dbReference type="GO" id="GO:0016020">
    <property type="term" value="C:membrane"/>
    <property type="evidence" value="ECO:0007669"/>
    <property type="project" value="UniProtKB-KW"/>
</dbReference>
<dbReference type="Gene3D" id="1.20.120.330">
    <property type="entry name" value="Nucleotidyltransferases domain 2"/>
    <property type="match status" value="2"/>
</dbReference>
<dbReference type="InterPro" id="IPR006972">
    <property type="entry name" value="BipB-like_C"/>
</dbReference>
<dbReference type="InterPro" id="IPR032391">
    <property type="entry name" value="IpaB/BipB/SctE_N"/>
</dbReference>
<dbReference type="InterPro" id="IPR003895">
    <property type="entry name" value="T3SS_SctE/BipB"/>
</dbReference>
<dbReference type="Pfam" id="PF04888">
    <property type="entry name" value="SseC"/>
    <property type="match status" value="1"/>
</dbReference>
<dbReference type="Pfam" id="PF16535">
    <property type="entry name" value="T3SSipB"/>
    <property type="match status" value="1"/>
</dbReference>
<dbReference type="PRINTS" id="PR01375">
    <property type="entry name" value="BACINVASINB"/>
</dbReference>
<protein>
    <recommendedName>
        <fullName>Translocator protein BipB</fullName>
    </recommendedName>
</protein>
<evidence type="ECO:0000250" key="1"/>
<evidence type="ECO:0000255" key="2"/>
<evidence type="ECO:0000256" key="3">
    <source>
        <dbReference type="SAM" id="MobiDB-lite"/>
    </source>
</evidence>
<evidence type="ECO:0000305" key="4"/>
<comment type="function">
    <text evidence="1">Plays a role in the bacterium-induced formation of multinucleated giant cell (MNGC), which is formed after host cell fusion, as well as in the intercellular spreading of bacteria and in the induction of apoptosis in macrophages. May act in concert with other effector proteins to induce fusion of host cell membranes (By similarity).</text>
</comment>
<comment type="subcellular location">
    <subcellularLocation>
        <location evidence="1">Secreted</location>
    </subcellularLocation>
    <subcellularLocation>
        <location evidence="1">Host membrane</location>
    </subcellularLocation>
    <text evidence="1">Secreted via the bsa type III secretion system, and probably inserted into host membranes.</text>
</comment>
<comment type="similarity">
    <text evidence="4">Belongs to the SctE/SipB/YopB family.</text>
</comment>
<name>BIPB_BURMA</name>